<comment type="subcellular location">
    <subcellularLocation>
        <location evidence="1">Virion</location>
    </subcellularLocation>
</comment>
<comment type="similarity">
    <text evidence="4">Belongs to the HHV-5 UL22A protein family.</text>
</comment>
<name>UL22A_HCMVM</name>
<sequence>MARRLWILSLLAVTLTVALAAPSQKSKRSVTVEQPSTSTNSDGNTTPSKNVTLSQGGSTTDGDEDYSGGDYDVLITDTDGGNHQQPQEKTDEHKGEHTKENEKTQ</sequence>
<organismHost>
    <name type="scientific">Homo sapiens</name>
    <name type="common">Human</name>
    <dbReference type="NCBI Taxonomy" id="9606"/>
</organismHost>
<keyword id="KW-0325">Glycoprotein</keyword>
<keyword id="KW-1185">Reference proteome</keyword>
<keyword id="KW-0732">Signal</keyword>
<keyword id="KW-0946">Virion</keyword>
<protein>
    <recommendedName>
        <fullName>Glycoprotein UL22A</fullName>
    </recommendedName>
</protein>
<evidence type="ECO:0000250" key="1"/>
<evidence type="ECO:0000255" key="2"/>
<evidence type="ECO:0000256" key="3">
    <source>
        <dbReference type="SAM" id="MobiDB-lite"/>
    </source>
</evidence>
<evidence type="ECO:0000305" key="4"/>
<dbReference type="EMBL" id="AY446894">
    <property type="protein sequence ID" value="AAR31587.1"/>
    <property type="molecule type" value="Genomic_DNA"/>
</dbReference>
<dbReference type="RefSeq" id="YP_081481.1">
    <property type="nucleotide sequence ID" value="NC_006273.2"/>
</dbReference>
<dbReference type="GlyCosmos" id="F5HF90">
    <property type="glycosylation" value="1 site, No reported glycans"/>
</dbReference>
<dbReference type="GeneID" id="3077571"/>
<dbReference type="KEGG" id="vg:3077571"/>
<dbReference type="Reactome" id="R-HSA-9610379">
    <property type="pathway name" value="HCMV Late Events"/>
</dbReference>
<dbReference type="Proteomes" id="UP000000938">
    <property type="component" value="Segment"/>
</dbReference>
<dbReference type="GO" id="GO:0044423">
    <property type="term" value="C:virion component"/>
    <property type="evidence" value="ECO:0007669"/>
    <property type="project" value="UniProtKB-KW"/>
</dbReference>
<dbReference type="InterPro" id="IPR009245">
    <property type="entry name" value="Cytomegalo_UL22A"/>
</dbReference>
<dbReference type="Pfam" id="PF05984">
    <property type="entry name" value="Cytomega_UL20A"/>
    <property type="match status" value="1"/>
</dbReference>
<gene>
    <name type="primary">UL22A</name>
</gene>
<feature type="signal peptide" evidence="2">
    <location>
        <begin position="1"/>
        <end position="20"/>
    </location>
</feature>
<feature type="chain" id="PRO_0000416714" description="Glycoprotein UL22A">
    <location>
        <begin position="21"/>
        <end position="105"/>
    </location>
</feature>
<feature type="region of interest" description="Disordered" evidence="3">
    <location>
        <begin position="21"/>
        <end position="105"/>
    </location>
</feature>
<feature type="compositionally biased region" description="Polar residues" evidence="3">
    <location>
        <begin position="29"/>
        <end position="55"/>
    </location>
</feature>
<feature type="compositionally biased region" description="Basic and acidic residues" evidence="3">
    <location>
        <begin position="86"/>
        <end position="105"/>
    </location>
</feature>
<feature type="glycosylation site" description="N-linked (GlcNAc...) asparagine; by host" evidence="2">
    <location>
        <position position="50"/>
    </location>
</feature>
<reference key="1">
    <citation type="journal article" date="2004" name="J. Gen. Virol.">
        <title>Genetic content of wild-type human cytomegalovirus.</title>
        <authorList>
            <person name="Dolan A."/>
            <person name="Cunningham C."/>
            <person name="Hector R.D."/>
            <person name="Hassan-Walker A.F."/>
            <person name="Lee L."/>
            <person name="Addison C."/>
            <person name="Dargan D.J."/>
            <person name="McGeoch D.J."/>
            <person name="Gatherer D."/>
            <person name="Emery V.C."/>
            <person name="Griffiths P.D."/>
            <person name="Sinzger C."/>
            <person name="McSharry B.P."/>
            <person name="Wilkinson G.W.G."/>
            <person name="Davison A.J."/>
        </authorList>
    </citation>
    <scope>NUCLEOTIDE SEQUENCE [LARGE SCALE GENOMIC DNA]</scope>
</reference>
<organism>
    <name type="scientific">Human cytomegalovirus (strain Merlin)</name>
    <name type="common">HHV-5</name>
    <name type="synonym">Human herpesvirus 5</name>
    <dbReference type="NCBI Taxonomy" id="295027"/>
    <lineage>
        <taxon>Viruses</taxon>
        <taxon>Duplodnaviria</taxon>
        <taxon>Heunggongvirae</taxon>
        <taxon>Peploviricota</taxon>
        <taxon>Herviviricetes</taxon>
        <taxon>Herpesvirales</taxon>
        <taxon>Orthoherpesviridae</taxon>
        <taxon>Betaherpesvirinae</taxon>
        <taxon>Cytomegalovirus</taxon>
        <taxon>Cytomegalovirus humanbeta5</taxon>
        <taxon>Human cytomegalovirus</taxon>
    </lineage>
</organism>
<proteinExistence type="inferred from homology"/>
<accession>F5HF90</accession>